<evidence type="ECO:0000250" key="1">
    <source>
        <dbReference type="UniProtKB" id="Q40577"/>
    </source>
</evidence>
<evidence type="ECO:0000269" key="2">
    <source>
    </source>
</evidence>
<evidence type="ECO:0000303" key="3">
    <source>
    </source>
</evidence>
<evidence type="ECO:0000305" key="4"/>
<gene>
    <name evidence="3" type="primary">TPS1C</name>
</gene>
<keyword id="KW-0456">Lyase</keyword>
<keyword id="KW-0460">Magnesium</keyword>
<keyword id="KW-0479">Metal-binding</keyword>
<organism>
    <name type="scientific">Camellia hiemalis</name>
    <name type="common">Camellia</name>
    <dbReference type="NCBI Taxonomy" id="1840584"/>
    <lineage>
        <taxon>Eukaryota</taxon>
        <taxon>Viridiplantae</taxon>
        <taxon>Streptophyta</taxon>
        <taxon>Embryophyta</taxon>
        <taxon>Tracheophyta</taxon>
        <taxon>Spermatophyta</taxon>
        <taxon>Magnoliopsida</taxon>
        <taxon>eudicotyledons</taxon>
        <taxon>Gunneridae</taxon>
        <taxon>Pentapetalae</taxon>
        <taxon>asterids</taxon>
        <taxon>Ericales</taxon>
        <taxon>Theaceae</taxon>
        <taxon>Camellia</taxon>
    </lineage>
</organism>
<accession>A0A348AUV7</accession>
<sequence length="554" mass="64136">MASSQVGDMVNGNAEPTRHLAKFPPSLWGDRFTSFTLDKQLWDKYGNEIEVLKEQVRSMVVAGGRKAAEQINLINVLERLGVSYHFEKEIEEQLEQLFAKFEDNEDYDLFTIALHFRIFRQHGYKMSCDVFNKFRDSNCEFKETVSNDVQGMLSLYEATYLKIRGEGFLDEAHAFTIAQLESLVEGPHLSSDLSEQVMHALKQSIHRGFPRLEAKHFISFYEKDASRNETLLRLAKLDFNQLQLSHREELCHIFRWWKELDLISKVPYARDRAVECFFWSTCAYYEPQHSVGRAGLTKIMLLLSVTDDTYDAYGTYNELKLYTNAVQRWDVSAMDELPDYMKALYRALLNVYDEVERDLAKQGRAYGVHHSKEAFKEIVRSYEIEAEWFKEGYVASFEEYMKNALVTSTGRLHTTSCFMGLEADVATTEAFEWILTKPKMVAASGAIGRLVDDVMSHDEEQERGHVATGLDCYMKQHGVSKQEAIVELYKMIENAWRDINEEMLKPTAISMKLLIRVLNLSRISDVVYKYVDGYTHPEIIKDHVISLFEDPIPM</sequence>
<reference key="1">
    <citation type="journal article" date="2018" name="Sci. Rep.">
        <title>Identification of novel sesquiterpene synthase genes that mediate the biosynthesis of valerianol, which was an unknown ingredient of tea.</title>
        <authorList>
            <person name="Hattan J."/>
            <person name="Shindo K."/>
            <person name="Sasaki T."/>
            <person name="Ohno F."/>
            <person name="Tokuda H."/>
            <person name="Ishikawa K."/>
            <person name="Misawa N."/>
        </authorList>
    </citation>
    <scope>NUCLEOTIDE SEQUENCE [MRNA]</scope>
</reference>
<dbReference type="EC" id="4.2.3.204" evidence="2"/>
<dbReference type="EMBL" id="LC212978">
    <property type="protein sequence ID" value="BBC44638.1"/>
    <property type="molecule type" value="mRNA"/>
</dbReference>
<dbReference type="SMR" id="A0A348AUV7"/>
<dbReference type="UniPathway" id="UPA00213"/>
<dbReference type="GO" id="GO:0016838">
    <property type="term" value="F:carbon-oxygen lyase activity, acting on phosphates"/>
    <property type="evidence" value="ECO:0000314"/>
    <property type="project" value="UniProtKB"/>
</dbReference>
<dbReference type="GO" id="GO:0000287">
    <property type="term" value="F:magnesium ion binding"/>
    <property type="evidence" value="ECO:0007669"/>
    <property type="project" value="InterPro"/>
</dbReference>
<dbReference type="GO" id="GO:0010333">
    <property type="term" value="F:terpene synthase activity"/>
    <property type="evidence" value="ECO:0007669"/>
    <property type="project" value="InterPro"/>
</dbReference>
<dbReference type="GO" id="GO:0016102">
    <property type="term" value="P:diterpenoid biosynthetic process"/>
    <property type="evidence" value="ECO:0007669"/>
    <property type="project" value="InterPro"/>
</dbReference>
<dbReference type="GO" id="GO:0016106">
    <property type="term" value="P:sesquiterpenoid biosynthetic process"/>
    <property type="evidence" value="ECO:0000314"/>
    <property type="project" value="UniProtKB"/>
</dbReference>
<dbReference type="CDD" id="cd00684">
    <property type="entry name" value="Terpene_cyclase_plant_C1"/>
    <property type="match status" value="1"/>
</dbReference>
<dbReference type="FunFam" id="1.10.600.10:FF:000007">
    <property type="entry name" value="Isoprene synthase, chloroplastic"/>
    <property type="match status" value="1"/>
</dbReference>
<dbReference type="FunFam" id="1.50.10.130:FF:000001">
    <property type="entry name" value="Isoprene synthase, chloroplastic"/>
    <property type="match status" value="1"/>
</dbReference>
<dbReference type="Gene3D" id="1.10.600.10">
    <property type="entry name" value="Farnesyl Diphosphate Synthase"/>
    <property type="match status" value="1"/>
</dbReference>
<dbReference type="Gene3D" id="1.50.10.130">
    <property type="entry name" value="Terpene synthase, N-terminal domain"/>
    <property type="match status" value="1"/>
</dbReference>
<dbReference type="InterPro" id="IPR008949">
    <property type="entry name" value="Isoprenoid_synthase_dom_sf"/>
</dbReference>
<dbReference type="InterPro" id="IPR034741">
    <property type="entry name" value="Terpene_cyclase-like_1_C"/>
</dbReference>
<dbReference type="InterPro" id="IPR044814">
    <property type="entry name" value="Terpene_cyclase_plant_C1"/>
</dbReference>
<dbReference type="InterPro" id="IPR001906">
    <property type="entry name" value="Terpene_synth_N"/>
</dbReference>
<dbReference type="InterPro" id="IPR036965">
    <property type="entry name" value="Terpene_synth_N_sf"/>
</dbReference>
<dbReference type="InterPro" id="IPR050148">
    <property type="entry name" value="Terpene_synthase-like"/>
</dbReference>
<dbReference type="InterPro" id="IPR005630">
    <property type="entry name" value="Terpene_synthase_metal-bd"/>
</dbReference>
<dbReference type="InterPro" id="IPR008930">
    <property type="entry name" value="Terpenoid_cyclase/PrenylTrfase"/>
</dbReference>
<dbReference type="PANTHER" id="PTHR31225:SF93">
    <property type="entry name" value="ALPHA-HUMULENE_(-)-(E)-BETA-CARYOPHYLLENE SYNTHASE"/>
    <property type="match status" value="1"/>
</dbReference>
<dbReference type="PANTHER" id="PTHR31225">
    <property type="entry name" value="OS04G0344100 PROTEIN-RELATED"/>
    <property type="match status" value="1"/>
</dbReference>
<dbReference type="Pfam" id="PF01397">
    <property type="entry name" value="Terpene_synth"/>
    <property type="match status" value="1"/>
</dbReference>
<dbReference type="Pfam" id="PF03936">
    <property type="entry name" value="Terpene_synth_C"/>
    <property type="match status" value="1"/>
</dbReference>
<dbReference type="SFLD" id="SFLDS00005">
    <property type="entry name" value="Isoprenoid_Synthase_Type_I"/>
    <property type="match status" value="1"/>
</dbReference>
<dbReference type="SFLD" id="SFLDG01019">
    <property type="entry name" value="Terpene_Cyclase_Like_1_C_Termi"/>
    <property type="match status" value="1"/>
</dbReference>
<dbReference type="SUPFAM" id="SSF48239">
    <property type="entry name" value="Terpenoid cyclases/Protein prenyltransferases"/>
    <property type="match status" value="1"/>
</dbReference>
<dbReference type="SUPFAM" id="SSF48576">
    <property type="entry name" value="Terpenoid synthases"/>
    <property type="match status" value="1"/>
</dbReference>
<protein>
    <recommendedName>
        <fullName evidence="4">Valerianol synthase TPS1C</fullName>
        <ecNumber evidence="2">4.2.3.204</ecNumber>
    </recommendedName>
    <alternativeName>
        <fullName evidence="3">Terpene synthase 1c</fullName>
        <shortName evidence="3">ChTps1c</shortName>
    </alternativeName>
</protein>
<comment type="function">
    <text evidence="2">Terpene synthase that catalyzes the biosynthesis of the terpene valerianol, which is a volatile compound of floral scent.</text>
</comment>
<comment type="catalytic activity">
    <reaction evidence="2">
        <text>(2E,6E)-farnesyl diphosphate + H2O = valerianol + diphosphate</text>
        <dbReference type="Rhea" id="RHEA:60424"/>
        <dbReference type="ChEBI" id="CHEBI:15377"/>
        <dbReference type="ChEBI" id="CHEBI:33019"/>
        <dbReference type="ChEBI" id="CHEBI:143779"/>
        <dbReference type="ChEBI" id="CHEBI:175763"/>
        <dbReference type="EC" id="4.2.3.204"/>
    </reaction>
    <physiologicalReaction direction="left-to-right" evidence="2">
        <dbReference type="Rhea" id="RHEA:60425"/>
    </physiologicalReaction>
</comment>
<comment type="cofactor">
    <cofactor evidence="1">
        <name>Mg(2+)</name>
        <dbReference type="ChEBI" id="CHEBI:18420"/>
    </cofactor>
    <text evidence="1">Binds 3 Mg(2+) ions per subunit.</text>
</comment>
<comment type="pathway">
    <text evidence="4">Secondary metabolite biosynthesis; terpenoid biosynthesis.</text>
</comment>
<comment type="domain">
    <text evidence="4">The Asp-Asp-Xaa-Xaa-Asp/Glu (DDXXD/E) motif is important for the catalytic activity, presumably through binding to Mg(2+).</text>
</comment>
<comment type="similarity">
    <text evidence="4">Belongs to the terpene synthase family.</text>
</comment>
<name>TPS1C_CAMHI</name>
<feature type="chain" id="PRO_0000451721" description="Valerianol synthase TPS1C">
    <location>
        <begin position="1"/>
        <end position="554"/>
    </location>
</feature>
<feature type="short sequence motif" description="DDXXD motif" evidence="4">
    <location>
        <begin position="326"/>
        <end position="330"/>
    </location>
</feature>
<feature type="binding site" evidence="1">
    <location>
        <position position="307"/>
    </location>
    <ligand>
        <name>Mg(2+)</name>
        <dbReference type="ChEBI" id="CHEBI:18420"/>
        <label>1</label>
    </ligand>
</feature>
<feature type="binding site" evidence="1">
    <location>
        <position position="307"/>
    </location>
    <ligand>
        <name>Mg(2+)</name>
        <dbReference type="ChEBI" id="CHEBI:18420"/>
        <label>2</label>
    </ligand>
</feature>
<feature type="binding site" evidence="1">
    <location>
        <position position="311"/>
    </location>
    <ligand>
        <name>Mg(2+)</name>
        <dbReference type="ChEBI" id="CHEBI:18420"/>
        <label>1</label>
    </ligand>
</feature>
<feature type="binding site" evidence="1">
    <location>
        <position position="311"/>
    </location>
    <ligand>
        <name>Mg(2+)</name>
        <dbReference type="ChEBI" id="CHEBI:18420"/>
        <label>2</label>
    </ligand>
</feature>
<feature type="binding site" evidence="1">
    <location>
        <position position="452"/>
    </location>
    <ligand>
        <name>Mg(2+)</name>
        <dbReference type="ChEBI" id="CHEBI:18420"/>
        <label>3</label>
    </ligand>
</feature>
<feature type="binding site" evidence="1">
    <location>
        <position position="456"/>
    </location>
    <ligand>
        <name>Mg(2+)</name>
        <dbReference type="ChEBI" id="CHEBI:18420"/>
        <label>3</label>
    </ligand>
</feature>
<feature type="binding site" evidence="1">
    <location>
        <position position="460"/>
    </location>
    <ligand>
        <name>Mg(2+)</name>
        <dbReference type="ChEBI" id="CHEBI:18420"/>
        <label>3</label>
    </ligand>
</feature>
<proteinExistence type="evidence at transcript level"/>